<comment type="similarity">
    <text evidence="1">Belongs to the universal ribosomal protein uL29 family.</text>
</comment>
<dbReference type="EMBL" id="CP000551">
    <property type="protein sequence ID" value="ABM71040.1"/>
    <property type="molecule type" value="Genomic_DNA"/>
</dbReference>
<dbReference type="RefSeq" id="WP_011819163.1">
    <property type="nucleotide sequence ID" value="NC_008816.1"/>
</dbReference>
<dbReference type="SMR" id="A2BTC9"/>
<dbReference type="STRING" id="146891.A9601_17571"/>
<dbReference type="KEGG" id="pmb:A9601_17571"/>
<dbReference type="eggNOG" id="COG0255">
    <property type="taxonomic scope" value="Bacteria"/>
</dbReference>
<dbReference type="HOGENOM" id="CLU_158491_0_1_3"/>
<dbReference type="OrthoDB" id="9815192at2"/>
<dbReference type="Proteomes" id="UP000002590">
    <property type="component" value="Chromosome"/>
</dbReference>
<dbReference type="GO" id="GO:0022625">
    <property type="term" value="C:cytosolic large ribosomal subunit"/>
    <property type="evidence" value="ECO:0007669"/>
    <property type="project" value="TreeGrafter"/>
</dbReference>
<dbReference type="GO" id="GO:0003735">
    <property type="term" value="F:structural constituent of ribosome"/>
    <property type="evidence" value="ECO:0007669"/>
    <property type="project" value="InterPro"/>
</dbReference>
<dbReference type="GO" id="GO:0006412">
    <property type="term" value="P:translation"/>
    <property type="evidence" value="ECO:0007669"/>
    <property type="project" value="UniProtKB-UniRule"/>
</dbReference>
<dbReference type="Gene3D" id="1.10.287.310">
    <property type="match status" value="1"/>
</dbReference>
<dbReference type="HAMAP" id="MF_00374">
    <property type="entry name" value="Ribosomal_uL29"/>
    <property type="match status" value="1"/>
</dbReference>
<dbReference type="InterPro" id="IPR050063">
    <property type="entry name" value="Ribosomal_protein_uL29"/>
</dbReference>
<dbReference type="InterPro" id="IPR001854">
    <property type="entry name" value="Ribosomal_uL29"/>
</dbReference>
<dbReference type="InterPro" id="IPR036049">
    <property type="entry name" value="Ribosomal_uL29_sf"/>
</dbReference>
<dbReference type="NCBIfam" id="TIGR00012">
    <property type="entry name" value="L29"/>
    <property type="match status" value="1"/>
</dbReference>
<dbReference type="PANTHER" id="PTHR10916">
    <property type="entry name" value="60S RIBOSOMAL PROTEIN L35/50S RIBOSOMAL PROTEIN L29"/>
    <property type="match status" value="1"/>
</dbReference>
<dbReference type="PANTHER" id="PTHR10916:SF0">
    <property type="entry name" value="LARGE RIBOSOMAL SUBUNIT PROTEIN UL29C"/>
    <property type="match status" value="1"/>
</dbReference>
<dbReference type="Pfam" id="PF00831">
    <property type="entry name" value="Ribosomal_L29"/>
    <property type="match status" value="1"/>
</dbReference>
<dbReference type="SUPFAM" id="SSF46561">
    <property type="entry name" value="Ribosomal protein L29 (L29p)"/>
    <property type="match status" value="1"/>
</dbReference>
<keyword id="KW-0687">Ribonucleoprotein</keyword>
<keyword id="KW-0689">Ribosomal protein</keyword>
<reference key="1">
    <citation type="journal article" date="2007" name="PLoS Genet.">
        <title>Patterns and implications of gene gain and loss in the evolution of Prochlorococcus.</title>
        <authorList>
            <person name="Kettler G.C."/>
            <person name="Martiny A.C."/>
            <person name="Huang K."/>
            <person name="Zucker J."/>
            <person name="Coleman M.L."/>
            <person name="Rodrigue S."/>
            <person name="Chen F."/>
            <person name="Lapidus A."/>
            <person name="Ferriera S."/>
            <person name="Johnson J."/>
            <person name="Steglich C."/>
            <person name="Church G.M."/>
            <person name="Richardson P."/>
            <person name="Chisholm S.W."/>
        </authorList>
    </citation>
    <scope>NUCLEOTIDE SEQUENCE [LARGE SCALE GENOMIC DNA]</scope>
    <source>
        <strain>AS9601</strain>
    </source>
</reference>
<sequence length="72" mass="8479">MKNSESLKEFKKLNSEQITEKIDQLRKDLFDLRFKQATRQLNETHKFKIIKKQVAQLLTLSKNQSASQTTPD</sequence>
<organism>
    <name type="scientific">Prochlorococcus marinus (strain AS9601)</name>
    <dbReference type="NCBI Taxonomy" id="146891"/>
    <lineage>
        <taxon>Bacteria</taxon>
        <taxon>Bacillati</taxon>
        <taxon>Cyanobacteriota</taxon>
        <taxon>Cyanophyceae</taxon>
        <taxon>Synechococcales</taxon>
        <taxon>Prochlorococcaceae</taxon>
        <taxon>Prochlorococcus</taxon>
    </lineage>
</organism>
<accession>A2BTC9</accession>
<proteinExistence type="inferred from homology"/>
<gene>
    <name evidence="1" type="primary">rpmC</name>
    <name evidence="1" type="synonym">rpl29</name>
    <name type="ordered locus">A9601_17571</name>
</gene>
<protein>
    <recommendedName>
        <fullName evidence="1">Large ribosomal subunit protein uL29</fullName>
    </recommendedName>
    <alternativeName>
        <fullName evidence="2">50S ribosomal protein L29</fullName>
    </alternativeName>
</protein>
<feature type="chain" id="PRO_1000007557" description="Large ribosomal subunit protein uL29">
    <location>
        <begin position="1"/>
        <end position="72"/>
    </location>
</feature>
<evidence type="ECO:0000255" key="1">
    <source>
        <dbReference type="HAMAP-Rule" id="MF_00374"/>
    </source>
</evidence>
<evidence type="ECO:0000305" key="2"/>
<name>RL29_PROMS</name>